<gene>
    <name evidence="1" type="primary">hslU</name>
    <name type="ordered locus">PputW619_0463</name>
</gene>
<organism>
    <name type="scientific">Pseudomonas putida (strain W619)</name>
    <dbReference type="NCBI Taxonomy" id="390235"/>
    <lineage>
        <taxon>Bacteria</taxon>
        <taxon>Pseudomonadati</taxon>
        <taxon>Pseudomonadota</taxon>
        <taxon>Gammaproteobacteria</taxon>
        <taxon>Pseudomonadales</taxon>
        <taxon>Pseudomonadaceae</taxon>
        <taxon>Pseudomonas</taxon>
    </lineage>
</organism>
<comment type="function">
    <text evidence="1">ATPase subunit of a proteasome-like degradation complex; this subunit has chaperone activity. The binding of ATP and its subsequent hydrolysis by HslU are essential for unfolding of protein substrates subsequently hydrolyzed by HslV. HslU recognizes the N-terminal part of its protein substrates and unfolds these before they are guided to HslV for hydrolysis.</text>
</comment>
<comment type="subunit">
    <text evidence="1">A double ring-shaped homohexamer of HslV is capped on each side by a ring-shaped HslU homohexamer. The assembly of the HslU/HslV complex is dependent on binding of ATP.</text>
</comment>
<comment type="subcellular location">
    <subcellularLocation>
        <location evidence="1">Cytoplasm</location>
    </subcellularLocation>
</comment>
<comment type="similarity">
    <text evidence="1">Belongs to the ClpX chaperone family. HslU subfamily.</text>
</comment>
<proteinExistence type="inferred from homology"/>
<reference key="1">
    <citation type="submission" date="2008-02" db="EMBL/GenBank/DDBJ databases">
        <title>Complete sequence of Pseudomonas putida W619.</title>
        <authorList>
            <person name="Copeland A."/>
            <person name="Lucas S."/>
            <person name="Lapidus A."/>
            <person name="Barry K."/>
            <person name="Detter J.C."/>
            <person name="Glavina del Rio T."/>
            <person name="Dalin E."/>
            <person name="Tice H."/>
            <person name="Pitluck S."/>
            <person name="Chain P."/>
            <person name="Malfatti S."/>
            <person name="Shin M."/>
            <person name="Vergez L."/>
            <person name="Schmutz J."/>
            <person name="Larimer F."/>
            <person name="Land M."/>
            <person name="Hauser L."/>
            <person name="Kyrpides N."/>
            <person name="Kim E."/>
            <person name="Taghavi S."/>
            <person name="Vangronsveld D."/>
            <person name="van der Lelie D."/>
            <person name="Richardson P."/>
        </authorList>
    </citation>
    <scope>NUCLEOTIDE SEQUENCE [LARGE SCALE GENOMIC DNA]</scope>
    <source>
        <strain>W619</strain>
    </source>
</reference>
<name>HSLU_PSEPW</name>
<keyword id="KW-0067">ATP-binding</keyword>
<keyword id="KW-0143">Chaperone</keyword>
<keyword id="KW-0963">Cytoplasm</keyword>
<keyword id="KW-0547">Nucleotide-binding</keyword>
<keyword id="KW-0346">Stress response</keyword>
<dbReference type="EMBL" id="CP000949">
    <property type="protein sequence ID" value="ACA70968.1"/>
    <property type="molecule type" value="Genomic_DNA"/>
</dbReference>
<dbReference type="SMR" id="B1J2T7"/>
<dbReference type="STRING" id="390235.PputW619_0463"/>
<dbReference type="KEGG" id="ppw:PputW619_0463"/>
<dbReference type="eggNOG" id="COG1220">
    <property type="taxonomic scope" value="Bacteria"/>
</dbReference>
<dbReference type="HOGENOM" id="CLU_033123_0_0_6"/>
<dbReference type="OrthoDB" id="9804062at2"/>
<dbReference type="GO" id="GO:0009376">
    <property type="term" value="C:HslUV protease complex"/>
    <property type="evidence" value="ECO:0007669"/>
    <property type="project" value="UniProtKB-UniRule"/>
</dbReference>
<dbReference type="GO" id="GO:0005524">
    <property type="term" value="F:ATP binding"/>
    <property type="evidence" value="ECO:0007669"/>
    <property type="project" value="UniProtKB-UniRule"/>
</dbReference>
<dbReference type="GO" id="GO:0016887">
    <property type="term" value="F:ATP hydrolysis activity"/>
    <property type="evidence" value="ECO:0007669"/>
    <property type="project" value="InterPro"/>
</dbReference>
<dbReference type="GO" id="GO:0008233">
    <property type="term" value="F:peptidase activity"/>
    <property type="evidence" value="ECO:0007669"/>
    <property type="project" value="InterPro"/>
</dbReference>
<dbReference type="GO" id="GO:0036402">
    <property type="term" value="F:proteasome-activating activity"/>
    <property type="evidence" value="ECO:0007669"/>
    <property type="project" value="UniProtKB-UniRule"/>
</dbReference>
<dbReference type="GO" id="GO:0043335">
    <property type="term" value="P:protein unfolding"/>
    <property type="evidence" value="ECO:0007669"/>
    <property type="project" value="UniProtKB-UniRule"/>
</dbReference>
<dbReference type="GO" id="GO:0051603">
    <property type="term" value="P:proteolysis involved in protein catabolic process"/>
    <property type="evidence" value="ECO:0007669"/>
    <property type="project" value="TreeGrafter"/>
</dbReference>
<dbReference type="CDD" id="cd19498">
    <property type="entry name" value="RecA-like_HslU"/>
    <property type="match status" value="1"/>
</dbReference>
<dbReference type="FunFam" id="1.10.8.10:FF:000028">
    <property type="entry name" value="ATP-dependent protease ATPase subunit HslU"/>
    <property type="match status" value="1"/>
</dbReference>
<dbReference type="FunFam" id="3.40.50.300:FF:000213">
    <property type="entry name" value="ATP-dependent protease ATPase subunit HslU"/>
    <property type="match status" value="1"/>
</dbReference>
<dbReference type="FunFam" id="3.40.50.300:FF:000220">
    <property type="entry name" value="ATP-dependent protease ATPase subunit HslU"/>
    <property type="match status" value="1"/>
</dbReference>
<dbReference type="Gene3D" id="1.10.8.60">
    <property type="match status" value="1"/>
</dbReference>
<dbReference type="Gene3D" id="1.10.8.10">
    <property type="entry name" value="DNA helicase RuvA subunit, C-terminal domain"/>
    <property type="match status" value="2"/>
</dbReference>
<dbReference type="Gene3D" id="3.40.50.300">
    <property type="entry name" value="P-loop containing nucleotide triphosphate hydrolases"/>
    <property type="match status" value="1"/>
</dbReference>
<dbReference type="HAMAP" id="MF_00249">
    <property type="entry name" value="HslU"/>
    <property type="match status" value="1"/>
</dbReference>
<dbReference type="InterPro" id="IPR003593">
    <property type="entry name" value="AAA+_ATPase"/>
</dbReference>
<dbReference type="InterPro" id="IPR050052">
    <property type="entry name" value="ATP-dep_Clp_protease_ClpX"/>
</dbReference>
<dbReference type="InterPro" id="IPR003959">
    <property type="entry name" value="ATPase_AAA_core"/>
</dbReference>
<dbReference type="InterPro" id="IPR019489">
    <property type="entry name" value="Clp_ATPase_C"/>
</dbReference>
<dbReference type="InterPro" id="IPR004491">
    <property type="entry name" value="HslU"/>
</dbReference>
<dbReference type="InterPro" id="IPR027417">
    <property type="entry name" value="P-loop_NTPase"/>
</dbReference>
<dbReference type="NCBIfam" id="TIGR00390">
    <property type="entry name" value="hslU"/>
    <property type="match status" value="1"/>
</dbReference>
<dbReference type="NCBIfam" id="NF003544">
    <property type="entry name" value="PRK05201.1"/>
    <property type="match status" value="1"/>
</dbReference>
<dbReference type="PANTHER" id="PTHR48102">
    <property type="entry name" value="ATP-DEPENDENT CLP PROTEASE ATP-BINDING SUBUNIT CLPX-LIKE, MITOCHONDRIAL-RELATED"/>
    <property type="match status" value="1"/>
</dbReference>
<dbReference type="PANTHER" id="PTHR48102:SF3">
    <property type="entry name" value="ATP-DEPENDENT PROTEASE ATPASE SUBUNIT HSLU"/>
    <property type="match status" value="1"/>
</dbReference>
<dbReference type="Pfam" id="PF00004">
    <property type="entry name" value="AAA"/>
    <property type="match status" value="1"/>
</dbReference>
<dbReference type="Pfam" id="PF07724">
    <property type="entry name" value="AAA_2"/>
    <property type="match status" value="1"/>
</dbReference>
<dbReference type="SMART" id="SM00382">
    <property type="entry name" value="AAA"/>
    <property type="match status" value="1"/>
</dbReference>
<dbReference type="SMART" id="SM01086">
    <property type="entry name" value="ClpB_D2-small"/>
    <property type="match status" value="1"/>
</dbReference>
<dbReference type="SUPFAM" id="SSF52540">
    <property type="entry name" value="P-loop containing nucleoside triphosphate hydrolases"/>
    <property type="match status" value="1"/>
</dbReference>
<accession>B1J2T7</accession>
<protein>
    <recommendedName>
        <fullName evidence="1">ATP-dependent protease ATPase subunit HslU</fullName>
    </recommendedName>
    <alternativeName>
        <fullName evidence="1">Unfoldase HslU</fullName>
    </alternativeName>
</protein>
<feature type="chain" id="PRO_1000100962" description="ATP-dependent protease ATPase subunit HslU">
    <location>
        <begin position="1"/>
        <end position="447"/>
    </location>
</feature>
<feature type="binding site" evidence="1">
    <location>
        <position position="17"/>
    </location>
    <ligand>
        <name>ATP</name>
        <dbReference type="ChEBI" id="CHEBI:30616"/>
    </ligand>
</feature>
<feature type="binding site" evidence="1">
    <location>
        <begin position="59"/>
        <end position="64"/>
    </location>
    <ligand>
        <name>ATP</name>
        <dbReference type="ChEBI" id="CHEBI:30616"/>
    </ligand>
</feature>
<feature type="binding site" evidence="1">
    <location>
        <position position="256"/>
    </location>
    <ligand>
        <name>ATP</name>
        <dbReference type="ChEBI" id="CHEBI:30616"/>
    </ligand>
</feature>
<feature type="binding site" evidence="1">
    <location>
        <position position="321"/>
    </location>
    <ligand>
        <name>ATP</name>
        <dbReference type="ChEBI" id="CHEBI:30616"/>
    </ligand>
</feature>
<feature type="binding site" evidence="1">
    <location>
        <position position="393"/>
    </location>
    <ligand>
        <name>ATP</name>
        <dbReference type="ChEBI" id="CHEBI:30616"/>
    </ligand>
</feature>
<sequence length="447" mass="49999">MSMTPREIVHELNRHIIGQDDAKRAVAIALRNRWRRMQLPAELRAEVTPKNILMIGPTGVGKTEIARRLAKLANAPFLKVEATKFTEVGYVGRDVESIIRDLADAAMKMLREQEIIRVRHRAEDAAEDRILDALLPQARVTSFSEEAAQTSSDSNTRQLFRKRLREGQLDDKEIEIEVADAVGVEIAAPPGMEEMTNQLQSLFANMGKGKRKARKLKVKEALKMVRDEEASRLVNDDDLKAKALEAVEQHGIVFIDEIDKVAKRGNVGGADVSREGVQRDLLPLIEGCTVNTKLGMVKTDHILFIASGAFHLSKPSDLVPELQGRLPIRVELKALTPEDFERILQEPHASLTEQYRELLKTEGLNIEFKADGIKRLAEIAYQVNEKTENIGARRLHTLLERLLEEVSFSAGDLASAHDEAPIQIDAAYVNGHLGELAQNEDLSRYIL</sequence>
<evidence type="ECO:0000255" key="1">
    <source>
        <dbReference type="HAMAP-Rule" id="MF_00249"/>
    </source>
</evidence>